<dbReference type="EMBL" id="CP000422">
    <property type="protein sequence ID" value="ABJ68433.1"/>
    <property type="molecule type" value="Genomic_DNA"/>
</dbReference>
<dbReference type="RefSeq" id="WP_011673652.1">
    <property type="nucleotide sequence ID" value="NC_008525.1"/>
</dbReference>
<dbReference type="SMR" id="Q03ED9"/>
<dbReference type="STRING" id="278197.PEPE_1395"/>
<dbReference type="GeneID" id="33061249"/>
<dbReference type="KEGG" id="ppe:PEPE_1395"/>
<dbReference type="eggNOG" id="COG0257">
    <property type="taxonomic scope" value="Bacteria"/>
</dbReference>
<dbReference type="HOGENOM" id="CLU_135723_6_2_9"/>
<dbReference type="OrthoDB" id="9802520at2"/>
<dbReference type="Proteomes" id="UP000000773">
    <property type="component" value="Chromosome"/>
</dbReference>
<dbReference type="GO" id="GO:0005737">
    <property type="term" value="C:cytoplasm"/>
    <property type="evidence" value="ECO:0007669"/>
    <property type="project" value="UniProtKB-ARBA"/>
</dbReference>
<dbReference type="GO" id="GO:1990904">
    <property type="term" value="C:ribonucleoprotein complex"/>
    <property type="evidence" value="ECO:0007669"/>
    <property type="project" value="UniProtKB-KW"/>
</dbReference>
<dbReference type="GO" id="GO:0005840">
    <property type="term" value="C:ribosome"/>
    <property type="evidence" value="ECO:0007669"/>
    <property type="project" value="UniProtKB-KW"/>
</dbReference>
<dbReference type="GO" id="GO:0003735">
    <property type="term" value="F:structural constituent of ribosome"/>
    <property type="evidence" value="ECO:0007669"/>
    <property type="project" value="InterPro"/>
</dbReference>
<dbReference type="GO" id="GO:0006412">
    <property type="term" value="P:translation"/>
    <property type="evidence" value="ECO:0007669"/>
    <property type="project" value="UniProtKB-UniRule"/>
</dbReference>
<dbReference type="HAMAP" id="MF_00251">
    <property type="entry name" value="Ribosomal_bL36"/>
    <property type="match status" value="1"/>
</dbReference>
<dbReference type="InterPro" id="IPR000473">
    <property type="entry name" value="Ribosomal_bL36"/>
</dbReference>
<dbReference type="InterPro" id="IPR035977">
    <property type="entry name" value="Ribosomal_bL36_sp"/>
</dbReference>
<dbReference type="NCBIfam" id="TIGR01022">
    <property type="entry name" value="rpmJ_bact"/>
    <property type="match status" value="1"/>
</dbReference>
<dbReference type="PANTHER" id="PTHR42888">
    <property type="entry name" value="50S RIBOSOMAL PROTEIN L36, CHLOROPLASTIC"/>
    <property type="match status" value="1"/>
</dbReference>
<dbReference type="PANTHER" id="PTHR42888:SF1">
    <property type="entry name" value="LARGE RIBOSOMAL SUBUNIT PROTEIN BL36C"/>
    <property type="match status" value="1"/>
</dbReference>
<dbReference type="Pfam" id="PF00444">
    <property type="entry name" value="Ribosomal_L36"/>
    <property type="match status" value="1"/>
</dbReference>
<dbReference type="SUPFAM" id="SSF57840">
    <property type="entry name" value="Ribosomal protein L36"/>
    <property type="match status" value="1"/>
</dbReference>
<dbReference type="PROSITE" id="PS00828">
    <property type="entry name" value="RIBOSOMAL_L36"/>
    <property type="match status" value="1"/>
</dbReference>
<accession>Q03ED9</accession>
<keyword id="KW-0687">Ribonucleoprotein</keyword>
<keyword id="KW-0689">Ribosomal protein</keyword>
<organism>
    <name type="scientific">Pediococcus pentosaceus (strain ATCC 25745 / CCUG 21536 / LMG 10740 / 183-1w)</name>
    <dbReference type="NCBI Taxonomy" id="278197"/>
    <lineage>
        <taxon>Bacteria</taxon>
        <taxon>Bacillati</taxon>
        <taxon>Bacillota</taxon>
        <taxon>Bacilli</taxon>
        <taxon>Lactobacillales</taxon>
        <taxon>Lactobacillaceae</taxon>
        <taxon>Pediococcus</taxon>
    </lineage>
</organism>
<protein>
    <recommendedName>
        <fullName evidence="1">Large ribosomal subunit protein bL36</fullName>
    </recommendedName>
    <alternativeName>
        <fullName evidence="2">50S ribosomal protein L36</fullName>
    </alternativeName>
</protein>
<feature type="chain" id="PRO_0000302261" description="Large ribosomal subunit protein bL36">
    <location>
        <begin position="1"/>
        <end position="39"/>
    </location>
</feature>
<sequence length="39" mass="4564">MKVRPSVKTMCEHCKIIRRKGRVMVICSANPKHKQRQGK</sequence>
<name>RL36_PEDPA</name>
<proteinExistence type="inferred from homology"/>
<comment type="similarity">
    <text evidence="1">Belongs to the bacterial ribosomal protein bL36 family.</text>
</comment>
<gene>
    <name evidence="1" type="primary">rpmJ</name>
    <name type="ordered locus">PEPE_1395</name>
</gene>
<reference key="1">
    <citation type="journal article" date="2006" name="Proc. Natl. Acad. Sci. U.S.A.">
        <title>Comparative genomics of the lactic acid bacteria.</title>
        <authorList>
            <person name="Makarova K.S."/>
            <person name="Slesarev A."/>
            <person name="Wolf Y.I."/>
            <person name="Sorokin A."/>
            <person name="Mirkin B."/>
            <person name="Koonin E.V."/>
            <person name="Pavlov A."/>
            <person name="Pavlova N."/>
            <person name="Karamychev V."/>
            <person name="Polouchine N."/>
            <person name="Shakhova V."/>
            <person name="Grigoriev I."/>
            <person name="Lou Y."/>
            <person name="Rohksar D."/>
            <person name="Lucas S."/>
            <person name="Huang K."/>
            <person name="Goodstein D.M."/>
            <person name="Hawkins T."/>
            <person name="Plengvidhya V."/>
            <person name="Welker D."/>
            <person name="Hughes J."/>
            <person name="Goh Y."/>
            <person name="Benson A."/>
            <person name="Baldwin K."/>
            <person name="Lee J.-H."/>
            <person name="Diaz-Muniz I."/>
            <person name="Dosti B."/>
            <person name="Smeianov V."/>
            <person name="Wechter W."/>
            <person name="Barabote R."/>
            <person name="Lorca G."/>
            <person name="Altermann E."/>
            <person name="Barrangou R."/>
            <person name="Ganesan B."/>
            <person name="Xie Y."/>
            <person name="Rawsthorne H."/>
            <person name="Tamir D."/>
            <person name="Parker C."/>
            <person name="Breidt F."/>
            <person name="Broadbent J.R."/>
            <person name="Hutkins R."/>
            <person name="O'Sullivan D."/>
            <person name="Steele J."/>
            <person name="Unlu G."/>
            <person name="Saier M.H. Jr."/>
            <person name="Klaenhammer T."/>
            <person name="Richardson P."/>
            <person name="Kozyavkin S."/>
            <person name="Weimer B.C."/>
            <person name="Mills D.A."/>
        </authorList>
    </citation>
    <scope>NUCLEOTIDE SEQUENCE [LARGE SCALE GENOMIC DNA]</scope>
    <source>
        <strain>ATCC 25745 / CCUG 21536 / LMG 10740 / 183-1w</strain>
    </source>
</reference>
<evidence type="ECO:0000255" key="1">
    <source>
        <dbReference type="HAMAP-Rule" id="MF_00251"/>
    </source>
</evidence>
<evidence type="ECO:0000305" key="2"/>